<dbReference type="EMBL" id="AE017198">
    <property type="protein sequence ID" value="AAS09280.1"/>
    <property type="molecule type" value="Genomic_DNA"/>
</dbReference>
<dbReference type="RefSeq" id="WP_003647502.1">
    <property type="nucleotide sequence ID" value="NC_005362.1"/>
</dbReference>
<dbReference type="SMR" id="Q74IQ7"/>
<dbReference type="GeneID" id="83570161"/>
<dbReference type="KEGG" id="ljo:LJ_1512"/>
<dbReference type="eggNOG" id="COG0335">
    <property type="taxonomic scope" value="Bacteria"/>
</dbReference>
<dbReference type="HOGENOM" id="CLU_103507_2_1_9"/>
<dbReference type="Proteomes" id="UP000000581">
    <property type="component" value="Chromosome"/>
</dbReference>
<dbReference type="GO" id="GO:0022625">
    <property type="term" value="C:cytosolic large ribosomal subunit"/>
    <property type="evidence" value="ECO:0007669"/>
    <property type="project" value="TreeGrafter"/>
</dbReference>
<dbReference type="GO" id="GO:0003735">
    <property type="term" value="F:structural constituent of ribosome"/>
    <property type="evidence" value="ECO:0007669"/>
    <property type="project" value="InterPro"/>
</dbReference>
<dbReference type="GO" id="GO:0006412">
    <property type="term" value="P:translation"/>
    <property type="evidence" value="ECO:0007669"/>
    <property type="project" value="UniProtKB-UniRule"/>
</dbReference>
<dbReference type="FunFam" id="2.30.30.790:FF:000001">
    <property type="entry name" value="50S ribosomal protein L19"/>
    <property type="match status" value="1"/>
</dbReference>
<dbReference type="Gene3D" id="2.30.30.790">
    <property type="match status" value="1"/>
</dbReference>
<dbReference type="HAMAP" id="MF_00402">
    <property type="entry name" value="Ribosomal_bL19"/>
    <property type="match status" value="1"/>
</dbReference>
<dbReference type="InterPro" id="IPR001857">
    <property type="entry name" value="Ribosomal_bL19"/>
</dbReference>
<dbReference type="InterPro" id="IPR018257">
    <property type="entry name" value="Ribosomal_bL19_CS"/>
</dbReference>
<dbReference type="InterPro" id="IPR038657">
    <property type="entry name" value="Ribosomal_bL19_sf"/>
</dbReference>
<dbReference type="InterPro" id="IPR008991">
    <property type="entry name" value="Translation_prot_SH3-like_sf"/>
</dbReference>
<dbReference type="NCBIfam" id="TIGR01024">
    <property type="entry name" value="rplS_bact"/>
    <property type="match status" value="1"/>
</dbReference>
<dbReference type="PANTHER" id="PTHR15680:SF9">
    <property type="entry name" value="LARGE RIBOSOMAL SUBUNIT PROTEIN BL19M"/>
    <property type="match status" value="1"/>
</dbReference>
<dbReference type="PANTHER" id="PTHR15680">
    <property type="entry name" value="RIBOSOMAL PROTEIN L19"/>
    <property type="match status" value="1"/>
</dbReference>
<dbReference type="Pfam" id="PF01245">
    <property type="entry name" value="Ribosomal_L19"/>
    <property type="match status" value="1"/>
</dbReference>
<dbReference type="PIRSF" id="PIRSF002191">
    <property type="entry name" value="Ribosomal_L19"/>
    <property type="match status" value="1"/>
</dbReference>
<dbReference type="PRINTS" id="PR00061">
    <property type="entry name" value="RIBOSOMALL19"/>
</dbReference>
<dbReference type="SUPFAM" id="SSF50104">
    <property type="entry name" value="Translation proteins SH3-like domain"/>
    <property type="match status" value="1"/>
</dbReference>
<dbReference type="PROSITE" id="PS01015">
    <property type="entry name" value="RIBOSOMAL_L19"/>
    <property type="match status" value="1"/>
</dbReference>
<name>RL19_LACJO</name>
<organism>
    <name type="scientific">Lactobacillus johnsonii (strain CNCM I-12250 / La1 / NCC 533)</name>
    <dbReference type="NCBI Taxonomy" id="257314"/>
    <lineage>
        <taxon>Bacteria</taxon>
        <taxon>Bacillati</taxon>
        <taxon>Bacillota</taxon>
        <taxon>Bacilli</taxon>
        <taxon>Lactobacillales</taxon>
        <taxon>Lactobacillaceae</taxon>
        <taxon>Lactobacillus</taxon>
    </lineage>
</organism>
<reference key="1">
    <citation type="journal article" date="2004" name="Proc. Natl. Acad. Sci. U.S.A.">
        <title>The genome sequence of the probiotic intestinal bacterium Lactobacillus johnsonii NCC 533.</title>
        <authorList>
            <person name="Pridmore R.D."/>
            <person name="Berger B."/>
            <person name="Desiere F."/>
            <person name="Vilanova D."/>
            <person name="Barretto C."/>
            <person name="Pittet A.-C."/>
            <person name="Zwahlen M.-C."/>
            <person name="Rouvet M."/>
            <person name="Altermann E."/>
            <person name="Barrangou R."/>
            <person name="Mollet B."/>
            <person name="Mercenier A."/>
            <person name="Klaenhammer T."/>
            <person name="Arigoni F."/>
            <person name="Schell M.A."/>
        </authorList>
    </citation>
    <scope>NUCLEOTIDE SEQUENCE [LARGE SCALE GENOMIC DNA]</scope>
    <source>
        <strain>CNCM I-1225 / La1 / NCC 533</strain>
    </source>
</reference>
<sequence>MDPLIQELTKEQLRDDMPDFRAGDTVRVHVRVVEGTHERIQMFEGVVIKRKGAGISATYTVRKMSSGIGVERTFPVNDPRVAKVEVLRHGRVRRAKLYYLRERHGKAARIAEKRRG</sequence>
<comment type="function">
    <text evidence="1">This protein is located at the 30S-50S ribosomal subunit interface and may play a role in the structure and function of the aminoacyl-tRNA binding site.</text>
</comment>
<comment type="similarity">
    <text evidence="1">Belongs to the bacterial ribosomal protein bL19 family.</text>
</comment>
<keyword id="KW-0687">Ribonucleoprotein</keyword>
<keyword id="KW-0689">Ribosomal protein</keyword>
<feature type="chain" id="PRO_0000163468" description="Large ribosomal subunit protein bL19">
    <location>
        <begin position="1"/>
        <end position="116"/>
    </location>
</feature>
<gene>
    <name evidence="1" type="primary">rplS</name>
    <name type="ordered locus">LJ_1512</name>
</gene>
<proteinExistence type="inferred from homology"/>
<evidence type="ECO:0000255" key="1">
    <source>
        <dbReference type="HAMAP-Rule" id="MF_00402"/>
    </source>
</evidence>
<evidence type="ECO:0000305" key="2"/>
<accession>Q74IQ7</accession>
<protein>
    <recommendedName>
        <fullName evidence="1">Large ribosomal subunit protein bL19</fullName>
    </recommendedName>
    <alternativeName>
        <fullName evidence="2">50S ribosomal protein L19</fullName>
    </alternativeName>
</protein>